<accession>Q5FVX7</accession>
<sequence>MAAIGVHLGCTCACVAVYKDGRADVVANDAGDRVTPAVVGFLEKETIVGLAAKQSRVRNATNTIVKVKQILGRSYGDPHTQKHISESKCIVVEKVGKPKYEIDTGETQKFVSSEDVAKLIFSKMKETAQSALGSDVNDVVITVPFDFGESQKKALGEAATAAGFSILRMIHEPSAALLAYGIGQESPTGKSNVLVYKLGGTSLSVTVIEVNSGIYRVLATSTYDDIGGICFTEALAQHLASEFQRTYKQDIRGNARAMMKLMNSADVAKHALSTLGSSNCFVDSLYDGIDFDCNVSRARFELICSSLFNQCIDPIKKLLEQIGFKANDVNQVVLCGGSARIPKLQQLIKDLFPEVEMLSSIPPDEVIPVGAAIQAGILIGKENLSTDLDTITIECSASDILVKETDESGDNKFTVLLPSGTPLPARRQHVLQAPGHISSVCLELYESGGKSPVESKFAQIVLKDLQKKASGVHDILTVLTMKRDGSLHITCTDKDSGKSEMITVEETP</sequence>
<keyword id="KW-0067">ATP-binding</keyword>
<keyword id="KW-0143">Chaperone</keyword>
<keyword id="KW-0963">Cytoplasm</keyword>
<keyword id="KW-0547">Nucleotide-binding</keyword>
<keyword id="KW-1185">Reference proteome</keyword>
<comment type="function">
    <text evidence="1">Component of the ribosome-associated complex (RAC), a complex involved in folding or maintaining nascent polypeptides in a folding-competent state.</text>
</comment>
<comment type="subunit">
    <text evidence="1">Component of ribosome-associated complex (RAC).</text>
</comment>
<comment type="subcellular location">
    <subcellularLocation>
        <location evidence="1">Cytoplasm</location>
        <location evidence="1">Cytosol</location>
    </subcellularLocation>
</comment>
<comment type="similarity">
    <text evidence="2">Belongs to the heat shock protein 70 family.</text>
</comment>
<protein>
    <recommendedName>
        <fullName>Heat shock 70 kDa protein 14</fullName>
    </recommendedName>
</protein>
<feature type="chain" id="PRO_0000405830" description="Heat shock 70 kDa protein 14">
    <location>
        <begin position="1"/>
        <end position="508"/>
    </location>
</feature>
<gene>
    <name type="primary">hspa14</name>
</gene>
<organism>
    <name type="scientific">Xenopus tropicalis</name>
    <name type="common">Western clawed frog</name>
    <name type="synonym">Silurana tropicalis</name>
    <dbReference type="NCBI Taxonomy" id="8364"/>
    <lineage>
        <taxon>Eukaryota</taxon>
        <taxon>Metazoa</taxon>
        <taxon>Chordata</taxon>
        <taxon>Craniata</taxon>
        <taxon>Vertebrata</taxon>
        <taxon>Euteleostomi</taxon>
        <taxon>Amphibia</taxon>
        <taxon>Batrachia</taxon>
        <taxon>Anura</taxon>
        <taxon>Pipoidea</taxon>
        <taxon>Pipidae</taxon>
        <taxon>Xenopodinae</taxon>
        <taxon>Xenopus</taxon>
        <taxon>Silurana</taxon>
    </lineage>
</organism>
<evidence type="ECO:0000250" key="1"/>
<evidence type="ECO:0000305" key="2"/>
<reference key="1">
    <citation type="submission" date="2005-02" db="EMBL/GenBank/DDBJ databases">
        <authorList>
            <consortium name="NIH - Xenopus Gene Collection (XGC) project"/>
        </authorList>
    </citation>
    <scope>NUCLEOTIDE SEQUENCE [LARGE SCALE MRNA]</scope>
</reference>
<proteinExistence type="evidence at transcript level"/>
<dbReference type="EMBL" id="BC089721">
    <property type="protein sequence ID" value="AAH89721.1"/>
    <property type="molecule type" value="mRNA"/>
</dbReference>
<dbReference type="RefSeq" id="NP_001015780.1">
    <property type="nucleotide sequence ID" value="NM_001015780.1"/>
</dbReference>
<dbReference type="SMR" id="Q5FVX7"/>
<dbReference type="FunCoup" id="Q5FVX7">
    <property type="interactions" value="3054"/>
</dbReference>
<dbReference type="STRING" id="8364.ENSXETP00000022706"/>
<dbReference type="PaxDb" id="8364-ENSXETP00000019988"/>
<dbReference type="DNASU" id="548497"/>
<dbReference type="GeneID" id="548497"/>
<dbReference type="KEGG" id="xtr:548497"/>
<dbReference type="AGR" id="Xenbase:XB-GENE-5932856"/>
<dbReference type="CTD" id="51182"/>
<dbReference type="Xenbase" id="XB-GENE-5932856">
    <property type="gene designation" value="hspa14"/>
</dbReference>
<dbReference type="eggNOG" id="KOG0101">
    <property type="taxonomic scope" value="Eukaryota"/>
</dbReference>
<dbReference type="HOGENOM" id="CLU_005965_0_3_1"/>
<dbReference type="InParanoid" id="Q5FVX7"/>
<dbReference type="OMA" id="DQVLMDH"/>
<dbReference type="OrthoDB" id="29851at2759"/>
<dbReference type="PhylomeDB" id="Q5FVX7"/>
<dbReference type="TreeFam" id="TF105045"/>
<dbReference type="Reactome" id="R-XTR-3371453">
    <property type="pathway name" value="Regulation of HSF1-mediated heat shock response"/>
</dbReference>
<dbReference type="Proteomes" id="UP000008143">
    <property type="component" value="Chromosome 3"/>
</dbReference>
<dbReference type="Bgee" id="ENSXETG00000009112">
    <property type="expression patterns" value="Expressed in embryo and 14 other cell types or tissues"/>
</dbReference>
<dbReference type="ExpressionAtlas" id="Q5FVX7">
    <property type="expression patterns" value="baseline and differential"/>
</dbReference>
<dbReference type="GO" id="GO:0005829">
    <property type="term" value="C:cytosol"/>
    <property type="evidence" value="ECO:0000250"/>
    <property type="project" value="UniProtKB"/>
</dbReference>
<dbReference type="GO" id="GO:0005524">
    <property type="term" value="F:ATP binding"/>
    <property type="evidence" value="ECO:0007669"/>
    <property type="project" value="UniProtKB-KW"/>
</dbReference>
<dbReference type="GO" id="GO:0140662">
    <property type="term" value="F:ATP-dependent protein folding chaperone"/>
    <property type="evidence" value="ECO:0007669"/>
    <property type="project" value="InterPro"/>
</dbReference>
<dbReference type="CDD" id="cd10238">
    <property type="entry name" value="ASKHA_NBD_HSP70_HSPA14"/>
    <property type="match status" value="1"/>
</dbReference>
<dbReference type="FunFam" id="2.60.34.10:FF:000013">
    <property type="entry name" value="Heat shock 70 kDa protein 14"/>
    <property type="match status" value="1"/>
</dbReference>
<dbReference type="FunFam" id="3.30.30.30:FF:000008">
    <property type="entry name" value="heat shock 70 kDa protein 14"/>
    <property type="match status" value="1"/>
</dbReference>
<dbReference type="FunFam" id="3.90.640.10:FF:000010">
    <property type="entry name" value="heat shock 70 kDa protein 14"/>
    <property type="match status" value="1"/>
</dbReference>
<dbReference type="FunFam" id="3.30.420.40:FF:000171">
    <property type="entry name" value="Heat shock 70 kDa protein 4"/>
    <property type="match status" value="1"/>
</dbReference>
<dbReference type="FunFam" id="3.30.420.40:FF:000433">
    <property type="entry name" value="Heat shock protein family A (Hsp70) member 14"/>
    <property type="match status" value="1"/>
</dbReference>
<dbReference type="Gene3D" id="3.30.30.30">
    <property type="match status" value="1"/>
</dbReference>
<dbReference type="Gene3D" id="3.30.420.40">
    <property type="match status" value="2"/>
</dbReference>
<dbReference type="Gene3D" id="3.90.640.10">
    <property type="entry name" value="Actin, Chain A, domain 4"/>
    <property type="match status" value="1"/>
</dbReference>
<dbReference type="Gene3D" id="2.60.34.10">
    <property type="entry name" value="Substrate Binding Domain Of DNAk, Chain A, domain 1"/>
    <property type="match status" value="1"/>
</dbReference>
<dbReference type="InterPro" id="IPR043129">
    <property type="entry name" value="ATPase_NBD"/>
</dbReference>
<dbReference type="InterPro" id="IPR029047">
    <property type="entry name" value="HSP70_peptide-bd_sf"/>
</dbReference>
<dbReference type="InterPro" id="IPR013126">
    <property type="entry name" value="Hsp_70_fam"/>
</dbReference>
<dbReference type="InterPro" id="IPR042049">
    <property type="entry name" value="HSPA14_NBD"/>
</dbReference>
<dbReference type="PANTHER" id="PTHR19375">
    <property type="entry name" value="HEAT SHOCK PROTEIN 70KDA"/>
    <property type="match status" value="1"/>
</dbReference>
<dbReference type="Pfam" id="PF00012">
    <property type="entry name" value="HSP70"/>
    <property type="match status" value="1"/>
</dbReference>
<dbReference type="PRINTS" id="PR00301">
    <property type="entry name" value="HEATSHOCK70"/>
</dbReference>
<dbReference type="SUPFAM" id="SSF53067">
    <property type="entry name" value="Actin-like ATPase domain"/>
    <property type="match status" value="2"/>
</dbReference>
<dbReference type="SUPFAM" id="SSF100920">
    <property type="entry name" value="Heat shock protein 70kD (HSP70), peptide-binding domain"/>
    <property type="match status" value="1"/>
</dbReference>
<name>HSP7E_XENTR</name>